<proteinExistence type="evidence at transcript level"/>
<organism>
    <name type="scientific">Agelena orientalis</name>
    <name type="common">Funnel-web spider</name>
    <dbReference type="NCBI Taxonomy" id="293813"/>
    <lineage>
        <taxon>Eukaryota</taxon>
        <taxon>Metazoa</taxon>
        <taxon>Ecdysozoa</taxon>
        <taxon>Arthropoda</taxon>
        <taxon>Chelicerata</taxon>
        <taxon>Arachnida</taxon>
        <taxon>Araneae</taxon>
        <taxon>Araneomorphae</taxon>
        <taxon>Entelegynae</taxon>
        <taxon>Agelenidae</taxon>
        <taxon>Agelena</taxon>
    </lineage>
</organism>
<comment type="function">
    <text evidence="1">Insect active toxin causing rapid but reversible paralysis in crickets. No activity shown in mammals. Does not show effect on mammalian voltage-gated calcium channels (By similarity).</text>
</comment>
<comment type="subcellular location">
    <subcellularLocation>
        <location evidence="1">Secreted</location>
    </subcellularLocation>
</comment>
<comment type="tissue specificity">
    <text>Expressed by the venom gland.</text>
</comment>
<comment type="domain">
    <text evidence="1">The presence of a 'disulfide through disulfide knot' structurally defines this protein as a knottin.</text>
</comment>
<comment type="similarity">
    <text evidence="3">Belongs to the neurotoxin 01 (U2-agtx) family.</text>
</comment>
<name>TAG2G_AGEOR</name>
<accession>Q5Y4X9</accession>
<keyword id="KW-0027">Amidation</keyword>
<keyword id="KW-1015">Disulfide bond</keyword>
<keyword id="KW-0960">Knottin</keyword>
<keyword id="KW-0528">Neurotoxin</keyword>
<keyword id="KW-0964">Secreted</keyword>
<keyword id="KW-0732">Signal</keyword>
<keyword id="KW-0800">Toxin</keyword>
<dbReference type="EMBL" id="AY681303">
    <property type="protein sequence ID" value="AAU93661.1"/>
    <property type="molecule type" value="mRNA"/>
</dbReference>
<dbReference type="SMR" id="Q5Y4X9"/>
<dbReference type="ArachnoServer" id="AS000107">
    <property type="toxin name" value="U2-agatoxin-Ao1g"/>
</dbReference>
<dbReference type="GO" id="GO:0005576">
    <property type="term" value="C:extracellular region"/>
    <property type="evidence" value="ECO:0007669"/>
    <property type="project" value="UniProtKB-SubCell"/>
</dbReference>
<dbReference type="GO" id="GO:0090729">
    <property type="term" value="F:toxin activity"/>
    <property type="evidence" value="ECO:0007669"/>
    <property type="project" value="UniProtKB-KW"/>
</dbReference>
<dbReference type="Pfam" id="PF05980">
    <property type="entry name" value="Toxin_7"/>
    <property type="match status" value="1"/>
</dbReference>
<dbReference type="SUPFAM" id="SSF57059">
    <property type="entry name" value="omega toxin-like"/>
    <property type="match status" value="1"/>
</dbReference>
<evidence type="ECO:0000250" key="1"/>
<evidence type="ECO:0000255" key="2"/>
<evidence type="ECO:0000305" key="3"/>
<sequence length="69" mass="7601">MKAIISLLLISAMVFSMIEAVPVEEGLQLFEGERGCLPHNRFCNALSGPRCCSGLRCKELSIWDSRCLG</sequence>
<feature type="signal peptide" evidence="2">
    <location>
        <begin position="1"/>
        <end position="20"/>
    </location>
</feature>
<feature type="propeptide" id="PRO_5000093615" evidence="2">
    <location>
        <begin position="21"/>
        <end position="34"/>
    </location>
</feature>
<feature type="chain" id="PRO_5000093616" description="U2-agatoxin-Ao1g">
    <location>
        <begin position="35"/>
        <end position="68"/>
    </location>
</feature>
<feature type="modified residue" description="Leucine amide" evidence="1">
    <location>
        <position position="68"/>
    </location>
</feature>
<feature type="disulfide bond" evidence="1">
    <location>
        <begin position="36"/>
        <end position="52"/>
    </location>
</feature>
<feature type="disulfide bond" evidence="1">
    <location>
        <begin position="43"/>
        <end position="57"/>
    </location>
</feature>
<feature type="disulfide bond" evidence="1">
    <location>
        <begin position="51"/>
        <end position="67"/>
    </location>
</feature>
<protein>
    <recommendedName>
        <fullName>U2-agatoxin-Ao1g</fullName>
        <shortName>U2-AGTX-Ao1g</shortName>
    </recommendedName>
    <alternativeName>
        <fullName>Toxin-like structure Agel_06</fullName>
    </alternativeName>
</protein>
<reference key="1">
    <citation type="journal article" date="2005" name="Proteins">
        <title>A novel strategy for the identification of toxinlike structures in spider venom.</title>
        <authorList>
            <person name="Kozlov S.A."/>
            <person name="Malyavka A."/>
            <person name="McCutchen B."/>
            <person name="Lu A."/>
            <person name="Schepers E."/>
            <person name="Herrmann R."/>
            <person name="Grishin E.V."/>
        </authorList>
    </citation>
    <scope>NUCLEOTIDE SEQUENCE [MRNA]</scope>
    <source>
        <tissue>Venom gland</tissue>
    </source>
</reference>